<evidence type="ECO:0000255" key="1">
    <source>
        <dbReference type="HAMAP-Rule" id="MF_00016"/>
    </source>
</evidence>
<feature type="chain" id="PRO_1000074107" description="Holliday junction branch migration complex subunit RuvB">
    <location>
        <begin position="1"/>
        <end position="332"/>
    </location>
</feature>
<feature type="region of interest" description="Large ATPase domain (RuvB-L)" evidence="1">
    <location>
        <begin position="1"/>
        <end position="181"/>
    </location>
</feature>
<feature type="region of interest" description="Small ATPAse domain (RuvB-S)" evidence="1">
    <location>
        <begin position="182"/>
        <end position="252"/>
    </location>
</feature>
<feature type="region of interest" description="Head domain (RuvB-H)" evidence="1">
    <location>
        <begin position="255"/>
        <end position="332"/>
    </location>
</feature>
<feature type="binding site" evidence="1">
    <location>
        <position position="20"/>
    </location>
    <ligand>
        <name>ATP</name>
        <dbReference type="ChEBI" id="CHEBI:30616"/>
    </ligand>
</feature>
<feature type="binding site" evidence="1">
    <location>
        <position position="21"/>
    </location>
    <ligand>
        <name>ATP</name>
        <dbReference type="ChEBI" id="CHEBI:30616"/>
    </ligand>
</feature>
<feature type="binding site" evidence="1">
    <location>
        <position position="62"/>
    </location>
    <ligand>
        <name>ATP</name>
        <dbReference type="ChEBI" id="CHEBI:30616"/>
    </ligand>
</feature>
<feature type="binding site" evidence="1">
    <location>
        <position position="65"/>
    </location>
    <ligand>
        <name>ATP</name>
        <dbReference type="ChEBI" id="CHEBI:30616"/>
    </ligand>
</feature>
<feature type="binding site" evidence="1">
    <location>
        <position position="66"/>
    </location>
    <ligand>
        <name>ATP</name>
        <dbReference type="ChEBI" id="CHEBI:30616"/>
    </ligand>
</feature>
<feature type="binding site" evidence="1">
    <location>
        <position position="66"/>
    </location>
    <ligand>
        <name>Mg(2+)</name>
        <dbReference type="ChEBI" id="CHEBI:18420"/>
    </ligand>
</feature>
<feature type="binding site" evidence="1">
    <location>
        <position position="67"/>
    </location>
    <ligand>
        <name>ATP</name>
        <dbReference type="ChEBI" id="CHEBI:30616"/>
    </ligand>
</feature>
<feature type="binding site" evidence="1">
    <location>
        <begin position="128"/>
        <end position="130"/>
    </location>
    <ligand>
        <name>ATP</name>
        <dbReference type="ChEBI" id="CHEBI:30616"/>
    </ligand>
</feature>
<feature type="binding site" evidence="1">
    <location>
        <position position="171"/>
    </location>
    <ligand>
        <name>ATP</name>
        <dbReference type="ChEBI" id="CHEBI:30616"/>
    </ligand>
</feature>
<feature type="binding site" evidence="1">
    <location>
        <position position="181"/>
    </location>
    <ligand>
        <name>ATP</name>
        <dbReference type="ChEBI" id="CHEBI:30616"/>
    </ligand>
</feature>
<feature type="binding site" evidence="1">
    <location>
        <position position="218"/>
    </location>
    <ligand>
        <name>ATP</name>
        <dbReference type="ChEBI" id="CHEBI:30616"/>
    </ligand>
</feature>
<feature type="binding site" evidence="1">
    <location>
        <position position="291"/>
    </location>
    <ligand>
        <name>DNA</name>
        <dbReference type="ChEBI" id="CHEBI:16991"/>
    </ligand>
</feature>
<feature type="binding site" evidence="1">
    <location>
        <position position="310"/>
    </location>
    <ligand>
        <name>DNA</name>
        <dbReference type="ChEBI" id="CHEBI:16991"/>
    </ligand>
</feature>
<feature type="binding site" evidence="1">
    <location>
        <position position="312"/>
    </location>
    <ligand>
        <name>DNA</name>
        <dbReference type="ChEBI" id="CHEBI:16991"/>
    </ligand>
</feature>
<feature type="binding site" evidence="1">
    <location>
        <position position="315"/>
    </location>
    <ligand>
        <name>DNA</name>
        <dbReference type="ChEBI" id="CHEBI:16991"/>
    </ligand>
</feature>
<protein>
    <recommendedName>
        <fullName evidence="1">Holliday junction branch migration complex subunit RuvB</fullName>
        <ecNumber evidence="1">3.6.4.-</ecNumber>
    </recommendedName>
</protein>
<keyword id="KW-0067">ATP-binding</keyword>
<keyword id="KW-0963">Cytoplasm</keyword>
<keyword id="KW-0227">DNA damage</keyword>
<keyword id="KW-0233">DNA recombination</keyword>
<keyword id="KW-0234">DNA repair</keyword>
<keyword id="KW-0238">DNA-binding</keyword>
<keyword id="KW-0378">Hydrolase</keyword>
<keyword id="KW-0547">Nucleotide-binding</keyword>
<keyword id="KW-1185">Reference proteome</keyword>
<reference key="1">
    <citation type="journal article" date="2007" name="J. Bacteriol.">
        <title>Genome-wide transcriptional changes in Streptococcus gordonii in response to competence signaling peptide.</title>
        <authorList>
            <person name="Vickerman M.M."/>
            <person name="Iobst S."/>
            <person name="Jesionowski A.M."/>
            <person name="Gill S.R."/>
        </authorList>
    </citation>
    <scope>NUCLEOTIDE SEQUENCE [LARGE SCALE GENOMIC DNA]</scope>
    <source>
        <strain>Challis / ATCC 35105 / BCRC 15272 / CH1 / DL1 / V288</strain>
    </source>
</reference>
<comment type="function">
    <text evidence="1">The RuvA-RuvB-RuvC complex processes Holliday junction (HJ) DNA during genetic recombination and DNA repair, while the RuvA-RuvB complex plays an important role in the rescue of blocked DNA replication forks via replication fork reversal (RFR). RuvA specifically binds to HJ cruciform DNA, conferring on it an open structure. The RuvB hexamer acts as an ATP-dependent pump, pulling dsDNA into and through the RuvAB complex. RuvB forms 2 homohexamers on either side of HJ DNA bound by 1 or 2 RuvA tetramers; 4 subunits per hexamer contact DNA at a time. Coordinated motions by a converter formed by DNA-disengaged RuvB subunits stimulates ATP hydrolysis and nucleotide exchange. Immobilization of the converter enables RuvB to convert the ATP-contained energy into a lever motion, pulling 2 nucleotides of DNA out of the RuvA tetramer per ATP hydrolyzed, thus driving DNA branch migration. The RuvB motors rotate together with the DNA substrate, which together with the progressing nucleotide cycle form the mechanistic basis for DNA recombination by continuous HJ branch migration. Branch migration allows RuvC to scan DNA until it finds its consensus sequence, where it cleaves and resolves cruciform DNA.</text>
</comment>
<comment type="catalytic activity">
    <reaction evidence="1">
        <text>ATP + H2O = ADP + phosphate + H(+)</text>
        <dbReference type="Rhea" id="RHEA:13065"/>
        <dbReference type="ChEBI" id="CHEBI:15377"/>
        <dbReference type="ChEBI" id="CHEBI:15378"/>
        <dbReference type="ChEBI" id="CHEBI:30616"/>
        <dbReference type="ChEBI" id="CHEBI:43474"/>
        <dbReference type="ChEBI" id="CHEBI:456216"/>
    </reaction>
</comment>
<comment type="subunit">
    <text evidence="1">Homohexamer. Forms an RuvA(8)-RuvB(12)-Holliday junction (HJ) complex. HJ DNA is sandwiched between 2 RuvA tetramers; dsDNA enters through RuvA and exits via RuvB. An RuvB hexamer assembles on each DNA strand where it exits the tetramer. Each RuvB hexamer is contacted by two RuvA subunits (via domain III) on 2 adjacent RuvB subunits; this complex drives branch migration. In the full resolvosome a probable DNA-RuvA(4)-RuvB(12)-RuvC(2) complex forms which resolves the HJ.</text>
</comment>
<comment type="subcellular location">
    <subcellularLocation>
        <location evidence="1">Cytoplasm</location>
    </subcellularLocation>
</comment>
<comment type="domain">
    <text evidence="1">Has 3 domains, the large (RuvB-L) and small ATPase (RuvB-S) domains and the C-terminal head (RuvB-H) domain. The head domain binds DNA, while the ATPase domains jointly bind ATP, ADP or are empty depending on the state of the subunit in the translocation cycle. During a single DNA translocation step the structure of each domain remains the same, but their relative positions change.</text>
</comment>
<comment type="similarity">
    <text evidence="1">Belongs to the RuvB family.</text>
</comment>
<accession>A8AUH0</accession>
<gene>
    <name evidence="1" type="primary">ruvB</name>
    <name type="ordered locus">SGO_0108</name>
</gene>
<dbReference type="EC" id="3.6.4.-" evidence="1"/>
<dbReference type="EMBL" id="CP000725">
    <property type="protein sequence ID" value="ABV10282.1"/>
    <property type="molecule type" value="Genomic_DNA"/>
</dbReference>
<dbReference type="RefSeq" id="WP_008808138.1">
    <property type="nucleotide sequence ID" value="NC_009785.1"/>
</dbReference>
<dbReference type="SMR" id="A8AUH0"/>
<dbReference type="STRING" id="467705.SGO_0108"/>
<dbReference type="GeneID" id="93788702"/>
<dbReference type="KEGG" id="sgo:SGO_0108"/>
<dbReference type="eggNOG" id="COG2255">
    <property type="taxonomic scope" value="Bacteria"/>
</dbReference>
<dbReference type="HOGENOM" id="CLU_055599_1_0_9"/>
<dbReference type="Proteomes" id="UP000001131">
    <property type="component" value="Chromosome"/>
</dbReference>
<dbReference type="GO" id="GO:0005737">
    <property type="term" value="C:cytoplasm"/>
    <property type="evidence" value="ECO:0007669"/>
    <property type="project" value="UniProtKB-SubCell"/>
</dbReference>
<dbReference type="GO" id="GO:0048476">
    <property type="term" value="C:Holliday junction resolvase complex"/>
    <property type="evidence" value="ECO:0007669"/>
    <property type="project" value="UniProtKB-UniRule"/>
</dbReference>
<dbReference type="GO" id="GO:0005524">
    <property type="term" value="F:ATP binding"/>
    <property type="evidence" value="ECO:0007669"/>
    <property type="project" value="UniProtKB-UniRule"/>
</dbReference>
<dbReference type="GO" id="GO:0016887">
    <property type="term" value="F:ATP hydrolysis activity"/>
    <property type="evidence" value="ECO:0007669"/>
    <property type="project" value="InterPro"/>
</dbReference>
<dbReference type="GO" id="GO:0000400">
    <property type="term" value="F:four-way junction DNA binding"/>
    <property type="evidence" value="ECO:0007669"/>
    <property type="project" value="UniProtKB-UniRule"/>
</dbReference>
<dbReference type="GO" id="GO:0009378">
    <property type="term" value="F:four-way junction helicase activity"/>
    <property type="evidence" value="ECO:0007669"/>
    <property type="project" value="InterPro"/>
</dbReference>
<dbReference type="GO" id="GO:0006310">
    <property type="term" value="P:DNA recombination"/>
    <property type="evidence" value="ECO:0007669"/>
    <property type="project" value="UniProtKB-UniRule"/>
</dbReference>
<dbReference type="GO" id="GO:0006281">
    <property type="term" value="P:DNA repair"/>
    <property type="evidence" value="ECO:0007669"/>
    <property type="project" value="UniProtKB-UniRule"/>
</dbReference>
<dbReference type="CDD" id="cd00009">
    <property type="entry name" value="AAA"/>
    <property type="match status" value="1"/>
</dbReference>
<dbReference type="Gene3D" id="1.10.8.60">
    <property type="match status" value="1"/>
</dbReference>
<dbReference type="Gene3D" id="3.40.50.300">
    <property type="entry name" value="P-loop containing nucleotide triphosphate hydrolases"/>
    <property type="match status" value="1"/>
</dbReference>
<dbReference type="Gene3D" id="1.10.10.10">
    <property type="entry name" value="Winged helix-like DNA-binding domain superfamily/Winged helix DNA-binding domain"/>
    <property type="match status" value="1"/>
</dbReference>
<dbReference type="HAMAP" id="MF_00016">
    <property type="entry name" value="DNA_HJ_migration_RuvB"/>
    <property type="match status" value="1"/>
</dbReference>
<dbReference type="InterPro" id="IPR003593">
    <property type="entry name" value="AAA+_ATPase"/>
</dbReference>
<dbReference type="InterPro" id="IPR041445">
    <property type="entry name" value="AAA_lid_4"/>
</dbReference>
<dbReference type="InterPro" id="IPR004605">
    <property type="entry name" value="DNA_helicase_Holl-junc_RuvB"/>
</dbReference>
<dbReference type="InterPro" id="IPR027417">
    <property type="entry name" value="P-loop_NTPase"/>
</dbReference>
<dbReference type="InterPro" id="IPR008824">
    <property type="entry name" value="RuvB-like_N"/>
</dbReference>
<dbReference type="InterPro" id="IPR008823">
    <property type="entry name" value="RuvB_C"/>
</dbReference>
<dbReference type="InterPro" id="IPR036388">
    <property type="entry name" value="WH-like_DNA-bd_sf"/>
</dbReference>
<dbReference type="InterPro" id="IPR036390">
    <property type="entry name" value="WH_DNA-bd_sf"/>
</dbReference>
<dbReference type="NCBIfam" id="NF000868">
    <property type="entry name" value="PRK00080.1"/>
    <property type="match status" value="1"/>
</dbReference>
<dbReference type="NCBIfam" id="TIGR00635">
    <property type="entry name" value="ruvB"/>
    <property type="match status" value="1"/>
</dbReference>
<dbReference type="PANTHER" id="PTHR42848">
    <property type="match status" value="1"/>
</dbReference>
<dbReference type="PANTHER" id="PTHR42848:SF1">
    <property type="entry name" value="HOLLIDAY JUNCTION BRANCH MIGRATION COMPLEX SUBUNIT RUVB"/>
    <property type="match status" value="1"/>
</dbReference>
<dbReference type="Pfam" id="PF17864">
    <property type="entry name" value="AAA_lid_4"/>
    <property type="match status" value="1"/>
</dbReference>
<dbReference type="Pfam" id="PF05491">
    <property type="entry name" value="RuvB_C"/>
    <property type="match status" value="1"/>
</dbReference>
<dbReference type="Pfam" id="PF05496">
    <property type="entry name" value="RuvB_N"/>
    <property type="match status" value="1"/>
</dbReference>
<dbReference type="SMART" id="SM00382">
    <property type="entry name" value="AAA"/>
    <property type="match status" value="1"/>
</dbReference>
<dbReference type="SUPFAM" id="SSF52540">
    <property type="entry name" value="P-loop containing nucleoside triphosphate hydrolases"/>
    <property type="match status" value="1"/>
</dbReference>
<dbReference type="SUPFAM" id="SSF46785">
    <property type="entry name" value="Winged helix' DNA-binding domain"/>
    <property type="match status" value="1"/>
</dbReference>
<name>RUVB_STRGC</name>
<organism>
    <name type="scientific">Streptococcus gordonii (strain Challis / ATCC 35105 / BCRC 15272 / CH1 / DL1 / V288)</name>
    <dbReference type="NCBI Taxonomy" id="467705"/>
    <lineage>
        <taxon>Bacteria</taxon>
        <taxon>Bacillati</taxon>
        <taxon>Bacillota</taxon>
        <taxon>Bacilli</taxon>
        <taxon>Lactobacillales</taxon>
        <taxon>Streptococcaceae</taxon>
        <taxon>Streptococcus</taxon>
    </lineage>
</organism>
<proteinExistence type="inferred from homology"/>
<sequence>MSRILDNEQMMDEEMVERTLRPQYLQEYIGQDKVKNQLKIFIEAAKLRDEALDHALLFGPPGLGKTTMAFVIANELGVNIKQTSGPVIEKAGDLVAILNDLEPGDVLFIDEIHRLPMAVEEVLYSAMEDFYIDIMIGSGDANRSVHLDLPPFTLIGATTRAGMLSNPLRARFGITGHMEYYEEADLTEIVERTAEIFEMDITHEAAKELALRSRGTPRIANRLLKRVRDYAQIMGNGLIDETITDQALSMLDVDHEGLDYVDQKILRTMIEMYGGGPVGLGTLSVNIAEERETVEDMYEPYLIQKGFIMRTRTGRVATRKAYEHLGYEYMEK</sequence>